<gene>
    <name evidence="1" type="primary">gatC</name>
    <name type="ordered locus">P9303_24311</name>
</gene>
<accession>A2CCF2</accession>
<name>GATC_PROM3</name>
<proteinExistence type="inferred from homology"/>
<dbReference type="EC" id="6.3.5.-" evidence="1"/>
<dbReference type="EMBL" id="CP000554">
    <property type="protein sequence ID" value="ABM79162.1"/>
    <property type="molecule type" value="Genomic_DNA"/>
</dbReference>
<dbReference type="RefSeq" id="WP_011827016.1">
    <property type="nucleotide sequence ID" value="NC_008820.1"/>
</dbReference>
<dbReference type="SMR" id="A2CCF2"/>
<dbReference type="STRING" id="59922.P9303_24311"/>
<dbReference type="KEGG" id="pmf:P9303_24311"/>
<dbReference type="HOGENOM" id="CLU_105899_1_2_3"/>
<dbReference type="BioCyc" id="PMAR59922:G1G80-2127-MONOMER"/>
<dbReference type="Proteomes" id="UP000002274">
    <property type="component" value="Chromosome"/>
</dbReference>
<dbReference type="GO" id="GO:0050566">
    <property type="term" value="F:asparaginyl-tRNA synthase (glutamine-hydrolyzing) activity"/>
    <property type="evidence" value="ECO:0007669"/>
    <property type="project" value="RHEA"/>
</dbReference>
<dbReference type="GO" id="GO:0005524">
    <property type="term" value="F:ATP binding"/>
    <property type="evidence" value="ECO:0007669"/>
    <property type="project" value="UniProtKB-KW"/>
</dbReference>
<dbReference type="GO" id="GO:0050567">
    <property type="term" value="F:glutaminyl-tRNA synthase (glutamine-hydrolyzing) activity"/>
    <property type="evidence" value="ECO:0007669"/>
    <property type="project" value="UniProtKB-UniRule"/>
</dbReference>
<dbReference type="GO" id="GO:0070681">
    <property type="term" value="P:glutaminyl-tRNAGln biosynthesis via transamidation"/>
    <property type="evidence" value="ECO:0007669"/>
    <property type="project" value="TreeGrafter"/>
</dbReference>
<dbReference type="GO" id="GO:0006450">
    <property type="term" value="P:regulation of translational fidelity"/>
    <property type="evidence" value="ECO:0007669"/>
    <property type="project" value="InterPro"/>
</dbReference>
<dbReference type="GO" id="GO:0006412">
    <property type="term" value="P:translation"/>
    <property type="evidence" value="ECO:0007669"/>
    <property type="project" value="UniProtKB-UniRule"/>
</dbReference>
<dbReference type="Gene3D" id="1.10.20.60">
    <property type="entry name" value="Glu-tRNAGln amidotransferase C subunit, N-terminal domain"/>
    <property type="match status" value="1"/>
</dbReference>
<dbReference type="HAMAP" id="MF_00122">
    <property type="entry name" value="GatC"/>
    <property type="match status" value="1"/>
</dbReference>
<dbReference type="InterPro" id="IPR036113">
    <property type="entry name" value="Asp/Glu-ADT_sf_sub_c"/>
</dbReference>
<dbReference type="InterPro" id="IPR003837">
    <property type="entry name" value="GatC"/>
</dbReference>
<dbReference type="NCBIfam" id="TIGR00135">
    <property type="entry name" value="gatC"/>
    <property type="match status" value="1"/>
</dbReference>
<dbReference type="PANTHER" id="PTHR15004">
    <property type="entry name" value="GLUTAMYL-TRNA(GLN) AMIDOTRANSFERASE SUBUNIT C, MITOCHONDRIAL"/>
    <property type="match status" value="1"/>
</dbReference>
<dbReference type="PANTHER" id="PTHR15004:SF0">
    <property type="entry name" value="GLUTAMYL-TRNA(GLN) AMIDOTRANSFERASE SUBUNIT C, MITOCHONDRIAL"/>
    <property type="match status" value="1"/>
</dbReference>
<dbReference type="Pfam" id="PF02686">
    <property type="entry name" value="GatC"/>
    <property type="match status" value="1"/>
</dbReference>
<dbReference type="SUPFAM" id="SSF141000">
    <property type="entry name" value="Glu-tRNAGln amidotransferase C subunit"/>
    <property type="match status" value="1"/>
</dbReference>
<evidence type="ECO:0000255" key="1">
    <source>
        <dbReference type="HAMAP-Rule" id="MF_00122"/>
    </source>
</evidence>
<feature type="chain" id="PRO_1000016173" description="Aspartyl/glutamyl-tRNA(Asn/Gln) amidotransferase subunit C">
    <location>
        <begin position="1"/>
        <end position="97"/>
    </location>
</feature>
<keyword id="KW-0067">ATP-binding</keyword>
<keyword id="KW-0436">Ligase</keyword>
<keyword id="KW-0547">Nucleotide-binding</keyword>
<keyword id="KW-0648">Protein biosynthesis</keyword>
<comment type="function">
    <text evidence="1">Allows the formation of correctly charged Asn-tRNA(Asn) or Gln-tRNA(Gln) through the transamidation of misacylated Asp-tRNA(Asn) or Glu-tRNA(Gln) in organisms which lack either or both of asparaginyl-tRNA or glutaminyl-tRNA synthetases. The reaction takes place in the presence of glutamine and ATP through an activated phospho-Asp-tRNA(Asn) or phospho-Glu-tRNA(Gln).</text>
</comment>
<comment type="catalytic activity">
    <reaction evidence="1">
        <text>L-glutamyl-tRNA(Gln) + L-glutamine + ATP + H2O = L-glutaminyl-tRNA(Gln) + L-glutamate + ADP + phosphate + H(+)</text>
        <dbReference type="Rhea" id="RHEA:17521"/>
        <dbReference type="Rhea" id="RHEA-COMP:9681"/>
        <dbReference type="Rhea" id="RHEA-COMP:9684"/>
        <dbReference type="ChEBI" id="CHEBI:15377"/>
        <dbReference type="ChEBI" id="CHEBI:15378"/>
        <dbReference type="ChEBI" id="CHEBI:29985"/>
        <dbReference type="ChEBI" id="CHEBI:30616"/>
        <dbReference type="ChEBI" id="CHEBI:43474"/>
        <dbReference type="ChEBI" id="CHEBI:58359"/>
        <dbReference type="ChEBI" id="CHEBI:78520"/>
        <dbReference type="ChEBI" id="CHEBI:78521"/>
        <dbReference type="ChEBI" id="CHEBI:456216"/>
    </reaction>
</comment>
<comment type="catalytic activity">
    <reaction evidence="1">
        <text>L-aspartyl-tRNA(Asn) + L-glutamine + ATP + H2O = L-asparaginyl-tRNA(Asn) + L-glutamate + ADP + phosphate + 2 H(+)</text>
        <dbReference type="Rhea" id="RHEA:14513"/>
        <dbReference type="Rhea" id="RHEA-COMP:9674"/>
        <dbReference type="Rhea" id="RHEA-COMP:9677"/>
        <dbReference type="ChEBI" id="CHEBI:15377"/>
        <dbReference type="ChEBI" id="CHEBI:15378"/>
        <dbReference type="ChEBI" id="CHEBI:29985"/>
        <dbReference type="ChEBI" id="CHEBI:30616"/>
        <dbReference type="ChEBI" id="CHEBI:43474"/>
        <dbReference type="ChEBI" id="CHEBI:58359"/>
        <dbReference type="ChEBI" id="CHEBI:78515"/>
        <dbReference type="ChEBI" id="CHEBI:78516"/>
        <dbReference type="ChEBI" id="CHEBI:456216"/>
    </reaction>
</comment>
<comment type="subunit">
    <text evidence="1">Heterotrimer of A, B and C subunits.</text>
</comment>
<comment type="similarity">
    <text evidence="1">Belongs to the GatC family.</text>
</comment>
<protein>
    <recommendedName>
        <fullName evidence="1">Aspartyl/glutamyl-tRNA(Asn/Gln) amidotransferase subunit C</fullName>
        <shortName evidence="1">Asp/Glu-ADT subunit C</shortName>
        <ecNumber evidence="1">6.3.5.-</ecNumber>
    </recommendedName>
</protein>
<reference key="1">
    <citation type="journal article" date="2007" name="PLoS Genet.">
        <title>Patterns and implications of gene gain and loss in the evolution of Prochlorococcus.</title>
        <authorList>
            <person name="Kettler G.C."/>
            <person name="Martiny A.C."/>
            <person name="Huang K."/>
            <person name="Zucker J."/>
            <person name="Coleman M.L."/>
            <person name="Rodrigue S."/>
            <person name="Chen F."/>
            <person name="Lapidus A."/>
            <person name="Ferriera S."/>
            <person name="Johnson J."/>
            <person name="Steglich C."/>
            <person name="Church G.M."/>
            <person name="Richardson P."/>
            <person name="Chisholm S.W."/>
        </authorList>
    </citation>
    <scope>NUCLEOTIDE SEQUENCE [LARGE SCALE GENOMIC DNA]</scope>
    <source>
        <strain>MIT 9303</strain>
    </source>
</reference>
<organism>
    <name type="scientific">Prochlorococcus marinus (strain MIT 9303)</name>
    <dbReference type="NCBI Taxonomy" id="59922"/>
    <lineage>
        <taxon>Bacteria</taxon>
        <taxon>Bacillati</taxon>
        <taxon>Cyanobacteriota</taxon>
        <taxon>Cyanophyceae</taxon>
        <taxon>Synechococcales</taxon>
        <taxon>Prochlorococcaceae</taxon>
        <taxon>Prochlorococcus</taxon>
    </lineage>
</organism>
<sequence length="97" mass="10938">MSKITAKDVRKVAQLARLDLPDDQIATYTEQLEKILAYVAQLEEIDTTNVKPTTRAVEVVNVTRTDEVSATPVREELLNLAPQREGDFFRVPKILAE</sequence>